<name>RS9_MARMS</name>
<reference key="1">
    <citation type="submission" date="2007-06" db="EMBL/GenBank/DDBJ databases">
        <title>Complete sequence of Marinomonas sp. MWYL1.</title>
        <authorList>
            <consortium name="US DOE Joint Genome Institute"/>
            <person name="Copeland A."/>
            <person name="Lucas S."/>
            <person name="Lapidus A."/>
            <person name="Barry K."/>
            <person name="Glavina del Rio T."/>
            <person name="Dalin E."/>
            <person name="Tice H."/>
            <person name="Pitluck S."/>
            <person name="Kiss H."/>
            <person name="Brettin T."/>
            <person name="Bruce D."/>
            <person name="Detter J.C."/>
            <person name="Han C."/>
            <person name="Schmutz J."/>
            <person name="Larimer F."/>
            <person name="Land M."/>
            <person name="Hauser L."/>
            <person name="Kyrpides N."/>
            <person name="Kim E."/>
            <person name="Johnston A.W.B."/>
            <person name="Todd J.D."/>
            <person name="Rogers R."/>
            <person name="Wexler M."/>
            <person name="Bond P.L."/>
            <person name="Li Y."/>
            <person name="Richardson P."/>
        </authorList>
    </citation>
    <scope>NUCLEOTIDE SEQUENCE [LARGE SCALE GENOMIC DNA]</scope>
    <source>
        <strain>MWYL1</strain>
    </source>
</reference>
<dbReference type="EMBL" id="CP000749">
    <property type="protein sequence ID" value="ABR71321.1"/>
    <property type="molecule type" value="Genomic_DNA"/>
</dbReference>
<dbReference type="SMR" id="A6VXZ2"/>
<dbReference type="STRING" id="400668.Mmwyl1_2399"/>
<dbReference type="KEGG" id="mmw:Mmwyl1_2399"/>
<dbReference type="eggNOG" id="COG0103">
    <property type="taxonomic scope" value="Bacteria"/>
</dbReference>
<dbReference type="HOGENOM" id="CLU_046483_2_1_6"/>
<dbReference type="OrthoDB" id="9803965at2"/>
<dbReference type="GO" id="GO:0022627">
    <property type="term" value="C:cytosolic small ribosomal subunit"/>
    <property type="evidence" value="ECO:0007669"/>
    <property type="project" value="TreeGrafter"/>
</dbReference>
<dbReference type="GO" id="GO:0003723">
    <property type="term" value="F:RNA binding"/>
    <property type="evidence" value="ECO:0007669"/>
    <property type="project" value="TreeGrafter"/>
</dbReference>
<dbReference type="GO" id="GO:0003735">
    <property type="term" value="F:structural constituent of ribosome"/>
    <property type="evidence" value="ECO:0007669"/>
    <property type="project" value="InterPro"/>
</dbReference>
<dbReference type="GO" id="GO:0006412">
    <property type="term" value="P:translation"/>
    <property type="evidence" value="ECO:0007669"/>
    <property type="project" value="UniProtKB-UniRule"/>
</dbReference>
<dbReference type="FunFam" id="3.30.230.10:FF:000001">
    <property type="entry name" value="30S ribosomal protein S9"/>
    <property type="match status" value="1"/>
</dbReference>
<dbReference type="Gene3D" id="3.30.230.10">
    <property type="match status" value="1"/>
</dbReference>
<dbReference type="HAMAP" id="MF_00532_B">
    <property type="entry name" value="Ribosomal_uS9_B"/>
    <property type="match status" value="1"/>
</dbReference>
<dbReference type="InterPro" id="IPR020568">
    <property type="entry name" value="Ribosomal_Su5_D2-typ_SF"/>
</dbReference>
<dbReference type="InterPro" id="IPR000754">
    <property type="entry name" value="Ribosomal_uS9"/>
</dbReference>
<dbReference type="InterPro" id="IPR023035">
    <property type="entry name" value="Ribosomal_uS9_bac/plastid"/>
</dbReference>
<dbReference type="InterPro" id="IPR020574">
    <property type="entry name" value="Ribosomal_uS9_CS"/>
</dbReference>
<dbReference type="InterPro" id="IPR014721">
    <property type="entry name" value="Ribsml_uS5_D2-typ_fold_subgr"/>
</dbReference>
<dbReference type="NCBIfam" id="NF001099">
    <property type="entry name" value="PRK00132.1"/>
    <property type="match status" value="1"/>
</dbReference>
<dbReference type="PANTHER" id="PTHR21569">
    <property type="entry name" value="RIBOSOMAL PROTEIN S9"/>
    <property type="match status" value="1"/>
</dbReference>
<dbReference type="PANTHER" id="PTHR21569:SF1">
    <property type="entry name" value="SMALL RIBOSOMAL SUBUNIT PROTEIN US9M"/>
    <property type="match status" value="1"/>
</dbReference>
<dbReference type="Pfam" id="PF00380">
    <property type="entry name" value="Ribosomal_S9"/>
    <property type="match status" value="1"/>
</dbReference>
<dbReference type="SUPFAM" id="SSF54211">
    <property type="entry name" value="Ribosomal protein S5 domain 2-like"/>
    <property type="match status" value="1"/>
</dbReference>
<dbReference type="PROSITE" id="PS00360">
    <property type="entry name" value="RIBOSOMAL_S9"/>
    <property type="match status" value="1"/>
</dbReference>
<sequence>MSATQYYGTGRRKTSTARVFLKAGSGNLVINNRSIDQYFGRETARMVVRQPLELVDATEKFDVYITVKGGGISGQAGAIRHGITRALMQYDETLRRTLRSAGFVTRDSREVERKKVGLRKARRRPQFSKR</sequence>
<proteinExistence type="inferred from homology"/>
<comment type="similarity">
    <text evidence="1">Belongs to the universal ribosomal protein uS9 family.</text>
</comment>
<feature type="chain" id="PRO_1000081821" description="Small ribosomal subunit protein uS9">
    <location>
        <begin position="1"/>
        <end position="130"/>
    </location>
</feature>
<feature type="region of interest" description="Disordered" evidence="2">
    <location>
        <begin position="107"/>
        <end position="130"/>
    </location>
</feature>
<feature type="compositionally biased region" description="Basic residues" evidence="2">
    <location>
        <begin position="116"/>
        <end position="130"/>
    </location>
</feature>
<evidence type="ECO:0000255" key="1">
    <source>
        <dbReference type="HAMAP-Rule" id="MF_00532"/>
    </source>
</evidence>
<evidence type="ECO:0000256" key="2">
    <source>
        <dbReference type="SAM" id="MobiDB-lite"/>
    </source>
</evidence>
<evidence type="ECO:0000305" key="3"/>
<protein>
    <recommendedName>
        <fullName evidence="1">Small ribosomal subunit protein uS9</fullName>
    </recommendedName>
    <alternativeName>
        <fullName evidence="3">30S ribosomal protein S9</fullName>
    </alternativeName>
</protein>
<accession>A6VXZ2</accession>
<gene>
    <name evidence="1" type="primary">rpsI</name>
    <name type="ordered locus">Mmwyl1_2399</name>
</gene>
<keyword id="KW-0687">Ribonucleoprotein</keyword>
<keyword id="KW-0689">Ribosomal protein</keyword>
<organism>
    <name type="scientific">Marinomonas sp. (strain MWYL1)</name>
    <dbReference type="NCBI Taxonomy" id="400668"/>
    <lineage>
        <taxon>Bacteria</taxon>
        <taxon>Pseudomonadati</taxon>
        <taxon>Pseudomonadota</taxon>
        <taxon>Gammaproteobacteria</taxon>
        <taxon>Oceanospirillales</taxon>
        <taxon>Oceanospirillaceae</taxon>
        <taxon>Marinomonas</taxon>
    </lineage>
</organism>